<evidence type="ECO:0000305" key="1"/>
<gene>
    <name type="primary">PCMP-H47</name>
    <name type="ordered locus">At5g65570</name>
    <name type="ORF">K21L13.8</name>
</gene>
<feature type="chain" id="PRO_0000363583" description="Pentatricopeptide repeat-containing protein At5g65570">
    <location>
        <begin position="1"/>
        <end position="738"/>
    </location>
</feature>
<feature type="repeat" description="PPR 1">
    <location>
        <begin position="98"/>
        <end position="128"/>
    </location>
</feature>
<feature type="repeat" description="PPR 2">
    <location>
        <begin position="129"/>
        <end position="163"/>
    </location>
</feature>
<feature type="repeat" description="PPR 3">
    <location>
        <begin position="164"/>
        <end position="198"/>
    </location>
</feature>
<feature type="repeat" description="PPR 4">
    <location>
        <begin position="200"/>
        <end position="230"/>
    </location>
</feature>
<feature type="repeat" description="PPR 5">
    <location>
        <begin position="231"/>
        <end position="265"/>
    </location>
</feature>
<feature type="repeat" description="PPR 6">
    <location>
        <begin position="266"/>
        <end position="300"/>
    </location>
</feature>
<feature type="repeat" description="PPR 7">
    <location>
        <begin position="301"/>
        <end position="331"/>
    </location>
</feature>
<feature type="repeat" description="PPR 8">
    <location>
        <begin position="332"/>
        <end position="366"/>
    </location>
</feature>
<feature type="repeat" description="PPR 9">
    <location>
        <begin position="367"/>
        <end position="401"/>
    </location>
</feature>
<feature type="repeat" description="PPR 10">
    <location>
        <begin position="402"/>
        <end position="432"/>
    </location>
</feature>
<feature type="repeat" description="PPR 11">
    <location>
        <begin position="433"/>
        <end position="467"/>
    </location>
</feature>
<feature type="repeat" description="PPR 12">
    <location>
        <begin position="468"/>
        <end position="502"/>
    </location>
</feature>
<feature type="repeat" description="PPR 13">
    <location>
        <begin position="503"/>
        <end position="537"/>
    </location>
</feature>
<feature type="region of interest" description="Type E motif">
    <location>
        <begin position="537"/>
        <end position="612"/>
    </location>
</feature>
<feature type="region of interest" description="Type E(+) motif">
    <location>
        <begin position="613"/>
        <end position="644"/>
    </location>
</feature>
<feature type="region of interest" description="Type DYW motif">
    <location>
        <begin position="645"/>
        <end position="738"/>
    </location>
</feature>
<sequence length="738" mass="83681">MGRYELHYGGDRRNNAPAMRRDYNGGLIAFSRYFSFFSSRTCSPESSINNQFRLLCITCDTLTTTHNFSQLLRQCIDERSISGIKTIQAHMLKSGFPAEISGSKLVDASLKCGDIDYARQVFDGMSERHIVTWNSLIAYLIKHRRSKEAVEMYRLMITNNVLPDEYTLSSVFKAFSDLSLEKEAQRSHGLAVILGLEVSNVFVGSALVDMYVKFGKTREAKLVLDRVEEKDVVLITALIVGYSQKGEDTEAVKAFQSMLVEKVQPNEYTYASVLISCGNLKDIGNGKLIHGLMVKSGFESALASQTSLLTMYLRCSLVDDSLRVFKCIEYPNQVSWTSLISGLVQNGREEMALIEFRKMMRDSIKPNSFTLSSALRGCSNLAMFEEGRQIHGIVTKYGFDRDKYAGSGLIDLYGKCGCSDMARLVFDTLSEVDVISLNTMIYSYAQNGFGREALDLFERMINLGLQPNDVTVLSVLLACNNSRLVEEGCELFDSFRKDKIMLTNDHYACMVDLLGRAGRLEEAEMLTTEVINPDLVLWRTLLSACKVHRKVEMAERITRKILEIEPGDEGTLILMSNLYASTGKWNRVIEMKSKMKDMKLKKNPAMSWVEINKETHTFMAGDLFSHPNSEQILENLEELIKKSKDLGYVEDKSCVFQDMEETAKERSLHQHSEKLAIAFAVWRNVGGSIRILKNLRVCVDCHSWIKIVSRVMKREIICRDSKRFHHFRDGSCSCGDYW</sequence>
<comment type="similarity">
    <text evidence="1">Belongs to the PPR family. PCMP-H subfamily.</text>
</comment>
<comment type="online information" name="Pentatricopeptide repeat proteins">
    <link uri="https://ppr.plantenergy.uwa.edu.au"/>
</comment>
<accession>Q9LSL8</accession>
<proteinExistence type="evidence at transcript level"/>
<protein>
    <recommendedName>
        <fullName>Pentatricopeptide repeat-containing protein At5g65570</fullName>
    </recommendedName>
</protein>
<dbReference type="EMBL" id="AB026639">
    <property type="protein sequence ID" value="BAA98176.1"/>
    <property type="molecule type" value="Genomic_DNA"/>
</dbReference>
<dbReference type="EMBL" id="CP002688">
    <property type="protein sequence ID" value="AED98072.1"/>
    <property type="molecule type" value="Genomic_DNA"/>
</dbReference>
<dbReference type="RefSeq" id="NP_201360.1">
    <property type="nucleotide sequence ID" value="NM_125955.2"/>
</dbReference>
<dbReference type="SMR" id="Q9LSL8"/>
<dbReference type="FunCoup" id="Q9LSL8">
    <property type="interactions" value="20"/>
</dbReference>
<dbReference type="PaxDb" id="3702-AT5G65570.1"/>
<dbReference type="EnsemblPlants" id="AT5G65570.1">
    <property type="protein sequence ID" value="AT5G65570.1"/>
    <property type="gene ID" value="AT5G65570"/>
</dbReference>
<dbReference type="GeneID" id="836683"/>
<dbReference type="Gramene" id="AT5G65570.1">
    <property type="protein sequence ID" value="AT5G65570.1"/>
    <property type="gene ID" value="AT5G65570"/>
</dbReference>
<dbReference type="KEGG" id="ath:AT5G65570"/>
<dbReference type="Araport" id="AT5G65570"/>
<dbReference type="TAIR" id="AT5G65570"/>
<dbReference type="eggNOG" id="KOG4197">
    <property type="taxonomic scope" value="Eukaryota"/>
</dbReference>
<dbReference type="HOGENOM" id="CLU_002706_15_1_1"/>
<dbReference type="InParanoid" id="Q9LSL8"/>
<dbReference type="OMA" id="GCSDMAR"/>
<dbReference type="PhylomeDB" id="Q9LSL8"/>
<dbReference type="PRO" id="PR:Q9LSL8"/>
<dbReference type="Proteomes" id="UP000006548">
    <property type="component" value="Chromosome 5"/>
</dbReference>
<dbReference type="ExpressionAtlas" id="Q9LSL8">
    <property type="expression patterns" value="baseline and differential"/>
</dbReference>
<dbReference type="GO" id="GO:0003723">
    <property type="term" value="F:RNA binding"/>
    <property type="evidence" value="ECO:0007669"/>
    <property type="project" value="InterPro"/>
</dbReference>
<dbReference type="GO" id="GO:0008270">
    <property type="term" value="F:zinc ion binding"/>
    <property type="evidence" value="ECO:0007669"/>
    <property type="project" value="InterPro"/>
</dbReference>
<dbReference type="GO" id="GO:0009451">
    <property type="term" value="P:RNA modification"/>
    <property type="evidence" value="ECO:0007669"/>
    <property type="project" value="InterPro"/>
</dbReference>
<dbReference type="FunFam" id="1.25.40.10:FF:000351">
    <property type="entry name" value="Pentatricopeptide repeat-containing protein"/>
    <property type="match status" value="1"/>
</dbReference>
<dbReference type="FunFam" id="1.25.40.10:FF:001767">
    <property type="entry name" value="Pentatricopeptide repeat-containing protein At5g15340, mitochondrial"/>
    <property type="match status" value="1"/>
</dbReference>
<dbReference type="FunFam" id="1.25.40.10:FF:002444">
    <property type="entry name" value="Pentatricopeptide repeat-containing protein At5g65570"/>
    <property type="match status" value="1"/>
</dbReference>
<dbReference type="FunFam" id="1.25.40.10:FF:002576">
    <property type="entry name" value="Pentatricopeptide repeat-containing protein At5g65570"/>
    <property type="match status" value="1"/>
</dbReference>
<dbReference type="FunFam" id="1.25.40.10:FF:000144">
    <property type="entry name" value="Pentatricopeptide repeat-containing protein, mitochondrial"/>
    <property type="match status" value="1"/>
</dbReference>
<dbReference type="Gene3D" id="1.25.40.10">
    <property type="entry name" value="Tetratricopeptide repeat domain"/>
    <property type="match status" value="5"/>
</dbReference>
<dbReference type="InterPro" id="IPR032867">
    <property type="entry name" value="DYW_dom"/>
</dbReference>
<dbReference type="InterPro" id="IPR046848">
    <property type="entry name" value="E_motif"/>
</dbReference>
<dbReference type="InterPro" id="IPR046849">
    <property type="entry name" value="Eplus_motif"/>
</dbReference>
<dbReference type="InterPro" id="IPR002885">
    <property type="entry name" value="Pentatricopeptide_rpt"/>
</dbReference>
<dbReference type="InterPro" id="IPR046960">
    <property type="entry name" value="PPR_At4g14850-like_plant"/>
</dbReference>
<dbReference type="InterPro" id="IPR011990">
    <property type="entry name" value="TPR-like_helical_dom_sf"/>
</dbReference>
<dbReference type="NCBIfam" id="TIGR00756">
    <property type="entry name" value="PPR"/>
    <property type="match status" value="4"/>
</dbReference>
<dbReference type="PANTHER" id="PTHR47926">
    <property type="entry name" value="PENTATRICOPEPTIDE REPEAT-CONTAINING PROTEIN"/>
    <property type="match status" value="1"/>
</dbReference>
<dbReference type="PANTHER" id="PTHR47926:SF342">
    <property type="entry name" value="TETRATRICOPEPTIDE-LIKE HELICAL DOMAIN-CONTAINING PROTEIN-RELATED"/>
    <property type="match status" value="1"/>
</dbReference>
<dbReference type="Pfam" id="PF14432">
    <property type="entry name" value="DYW_deaminase"/>
    <property type="match status" value="1"/>
</dbReference>
<dbReference type="Pfam" id="PF20431">
    <property type="entry name" value="E_motif"/>
    <property type="match status" value="1"/>
</dbReference>
<dbReference type="Pfam" id="PF20430">
    <property type="entry name" value="Eplus_motif"/>
    <property type="match status" value="1"/>
</dbReference>
<dbReference type="Pfam" id="PF01535">
    <property type="entry name" value="PPR"/>
    <property type="match status" value="1"/>
</dbReference>
<dbReference type="Pfam" id="PF13041">
    <property type="entry name" value="PPR_2"/>
    <property type="match status" value="4"/>
</dbReference>
<dbReference type="PROSITE" id="PS51375">
    <property type="entry name" value="PPR"/>
    <property type="match status" value="13"/>
</dbReference>
<keyword id="KW-1185">Reference proteome</keyword>
<keyword id="KW-0677">Repeat</keyword>
<organism>
    <name type="scientific">Arabidopsis thaliana</name>
    <name type="common">Mouse-ear cress</name>
    <dbReference type="NCBI Taxonomy" id="3702"/>
    <lineage>
        <taxon>Eukaryota</taxon>
        <taxon>Viridiplantae</taxon>
        <taxon>Streptophyta</taxon>
        <taxon>Embryophyta</taxon>
        <taxon>Tracheophyta</taxon>
        <taxon>Spermatophyta</taxon>
        <taxon>Magnoliopsida</taxon>
        <taxon>eudicotyledons</taxon>
        <taxon>Gunneridae</taxon>
        <taxon>Pentapetalae</taxon>
        <taxon>rosids</taxon>
        <taxon>malvids</taxon>
        <taxon>Brassicales</taxon>
        <taxon>Brassicaceae</taxon>
        <taxon>Camelineae</taxon>
        <taxon>Arabidopsis</taxon>
    </lineage>
</organism>
<reference key="1">
    <citation type="submission" date="1999-04" db="EMBL/GenBank/DDBJ databases">
        <title>Structural analysis of Arabidopsis thaliana chromosome 5. XI.</title>
        <authorList>
            <person name="Kaneko T."/>
            <person name="Katoh T."/>
            <person name="Asamizu E."/>
            <person name="Sato S."/>
            <person name="Nakamura Y."/>
            <person name="Kotani H."/>
            <person name="Tabata S."/>
        </authorList>
    </citation>
    <scope>NUCLEOTIDE SEQUENCE [LARGE SCALE GENOMIC DNA]</scope>
    <source>
        <strain>cv. Columbia</strain>
    </source>
</reference>
<reference key="2">
    <citation type="journal article" date="2017" name="Plant J.">
        <title>Araport11: a complete reannotation of the Arabidopsis thaliana reference genome.</title>
        <authorList>
            <person name="Cheng C.Y."/>
            <person name="Krishnakumar V."/>
            <person name="Chan A.P."/>
            <person name="Thibaud-Nissen F."/>
            <person name="Schobel S."/>
            <person name="Town C.D."/>
        </authorList>
    </citation>
    <scope>GENOME REANNOTATION</scope>
    <source>
        <strain>cv. Columbia</strain>
    </source>
</reference>
<reference key="3">
    <citation type="journal article" date="2000" name="Plant Mol. Biol.">
        <title>In Arabidopsis thaliana, 1% of the genome codes for a novel protein family unique to plants.</title>
        <authorList>
            <person name="Aubourg S."/>
            <person name="Boudet N."/>
            <person name="Kreis M."/>
            <person name="Lecharny A."/>
        </authorList>
    </citation>
    <scope>GENE FAMILY</scope>
</reference>
<reference key="4">
    <citation type="journal article" date="2004" name="Plant Cell">
        <title>Genome-wide analysis of Arabidopsis pentatricopeptide repeat proteins reveals their essential role in organelle biogenesis.</title>
        <authorList>
            <person name="Lurin C."/>
            <person name="Andres C."/>
            <person name="Aubourg S."/>
            <person name="Bellaoui M."/>
            <person name="Bitton F."/>
            <person name="Bruyere C."/>
            <person name="Caboche M."/>
            <person name="Debast C."/>
            <person name="Gualberto J."/>
            <person name="Hoffmann B."/>
            <person name="Lecharny A."/>
            <person name="Le Ret M."/>
            <person name="Martin-Magniette M.-L."/>
            <person name="Mireau H."/>
            <person name="Peeters N."/>
            <person name="Renou J.-P."/>
            <person name="Szurek B."/>
            <person name="Taconnat L."/>
            <person name="Small I."/>
        </authorList>
    </citation>
    <scope>GENE FAMILY</scope>
</reference>
<name>PP446_ARATH</name>